<dbReference type="EC" id="6.3.4.5" evidence="1"/>
<dbReference type="EMBL" id="CP000699">
    <property type="protein sequence ID" value="ABQ69321.1"/>
    <property type="molecule type" value="Genomic_DNA"/>
</dbReference>
<dbReference type="SMR" id="A5VAK5"/>
<dbReference type="STRING" id="392499.Swit_2970"/>
<dbReference type="PaxDb" id="392499-Swit_2970"/>
<dbReference type="KEGG" id="swi:Swit_2970"/>
<dbReference type="eggNOG" id="COG0137">
    <property type="taxonomic scope" value="Bacteria"/>
</dbReference>
<dbReference type="HOGENOM" id="CLU_032784_4_2_5"/>
<dbReference type="OrthoDB" id="9801641at2"/>
<dbReference type="UniPathway" id="UPA00068">
    <property type="reaction ID" value="UER00113"/>
</dbReference>
<dbReference type="Proteomes" id="UP000001989">
    <property type="component" value="Chromosome"/>
</dbReference>
<dbReference type="GO" id="GO:0005737">
    <property type="term" value="C:cytoplasm"/>
    <property type="evidence" value="ECO:0007669"/>
    <property type="project" value="UniProtKB-SubCell"/>
</dbReference>
<dbReference type="GO" id="GO:0004055">
    <property type="term" value="F:argininosuccinate synthase activity"/>
    <property type="evidence" value="ECO:0007669"/>
    <property type="project" value="UniProtKB-UniRule"/>
</dbReference>
<dbReference type="GO" id="GO:0005524">
    <property type="term" value="F:ATP binding"/>
    <property type="evidence" value="ECO:0007669"/>
    <property type="project" value="UniProtKB-UniRule"/>
</dbReference>
<dbReference type="GO" id="GO:0000053">
    <property type="term" value="P:argininosuccinate metabolic process"/>
    <property type="evidence" value="ECO:0007669"/>
    <property type="project" value="TreeGrafter"/>
</dbReference>
<dbReference type="GO" id="GO:0006526">
    <property type="term" value="P:L-arginine biosynthetic process"/>
    <property type="evidence" value="ECO:0007669"/>
    <property type="project" value="UniProtKB-UniRule"/>
</dbReference>
<dbReference type="GO" id="GO:0000050">
    <property type="term" value="P:urea cycle"/>
    <property type="evidence" value="ECO:0007669"/>
    <property type="project" value="TreeGrafter"/>
</dbReference>
<dbReference type="CDD" id="cd01999">
    <property type="entry name" value="ASS"/>
    <property type="match status" value="1"/>
</dbReference>
<dbReference type="FunFam" id="3.40.50.620:FF:000019">
    <property type="entry name" value="Argininosuccinate synthase"/>
    <property type="match status" value="1"/>
</dbReference>
<dbReference type="FunFam" id="3.90.1260.10:FF:000007">
    <property type="entry name" value="Argininosuccinate synthase"/>
    <property type="match status" value="1"/>
</dbReference>
<dbReference type="Gene3D" id="3.90.1260.10">
    <property type="entry name" value="Argininosuccinate synthetase, chain A, domain 2"/>
    <property type="match status" value="1"/>
</dbReference>
<dbReference type="Gene3D" id="3.40.50.620">
    <property type="entry name" value="HUPs"/>
    <property type="match status" value="1"/>
</dbReference>
<dbReference type="Gene3D" id="1.20.5.470">
    <property type="entry name" value="Single helix bin"/>
    <property type="match status" value="1"/>
</dbReference>
<dbReference type="HAMAP" id="MF_00005">
    <property type="entry name" value="Arg_succ_synth_type1"/>
    <property type="match status" value="1"/>
</dbReference>
<dbReference type="InterPro" id="IPR048268">
    <property type="entry name" value="Arginosuc_syn_C"/>
</dbReference>
<dbReference type="InterPro" id="IPR048267">
    <property type="entry name" value="Arginosuc_syn_N"/>
</dbReference>
<dbReference type="InterPro" id="IPR001518">
    <property type="entry name" value="Arginosuc_synth"/>
</dbReference>
<dbReference type="InterPro" id="IPR018223">
    <property type="entry name" value="Arginosuc_synth_CS"/>
</dbReference>
<dbReference type="InterPro" id="IPR023434">
    <property type="entry name" value="Arginosuc_synth_type_1_subfam"/>
</dbReference>
<dbReference type="InterPro" id="IPR024074">
    <property type="entry name" value="AS_cat/multimer_dom_body"/>
</dbReference>
<dbReference type="InterPro" id="IPR014729">
    <property type="entry name" value="Rossmann-like_a/b/a_fold"/>
</dbReference>
<dbReference type="NCBIfam" id="TIGR00032">
    <property type="entry name" value="argG"/>
    <property type="match status" value="1"/>
</dbReference>
<dbReference type="NCBIfam" id="NF001770">
    <property type="entry name" value="PRK00509.1"/>
    <property type="match status" value="1"/>
</dbReference>
<dbReference type="PANTHER" id="PTHR11587">
    <property type="entry name" value="ARGININOSUCCINATE SYNTHASE"/>
    <property type="match status" value="1"/>
</dbReference>
<dbReference type="PANTHER" id="PTHR11587:SF2">
    <property type="entry name" value="ARGININOSUCCINATE SYNTHASE"/>
    <property type="match status" value="1"/>
</dbReference>
<dbReference type="Pfam" id="PF20979">
    <property type="entry name" value="Arginosuc_syn_C"/>
    <property type="match status" value="1"/>
</dbReference>
<dbReference type="Pfam" id="PF00764">
    <property type="entry name" value="Arginosuc_synth"/>
    <property type="match status" value="1"/>
</dbReference>
<dbReference type="SUPFAM" id="SSF52402">
    <property type="entry name" value="Adenine nucleotide alpha hydrolases-like"/>
    <property type="match status" value="1"/>
</dbReference>
<dbReference type="SUPFAM" id="SSF69864">
    <property type="entry name" value="Argininosuccinate synthetase, C-terminal domain"/>
    <property type="match status" value="1"/>
</dbReference>
<dbReference type="PROSITE" id="PS00564">
    <property type="entry name" value="ARGININOSUCCIN_SYN_1"/>
    <property type="match status" value="1"/>
</dbReference>
<dbReference type="PROSITE" id="PS00565">
    <property type="entry name" value="ARGININOSUCCIN_SYN_2"/>
    <property type="match status" value="1"/>
</dbReference>
<feature type="chain" id="PRO_0000321318" description="Argininosuccinate synthase">
    <location>
        <begin position="1"/>
        <end position="405"/>
    </location>
</feature>
<feature type="binding site" evidence="1">
    <location>
        <begin position="10"/>
        <end position="18"/>
    </location>
    <ligand>
        <name>ATP</name>
        <dbReference type="ChEBI" id="CHEBI:30616"/>
    </ligand>
</feature>
<feature type="binding site" evidence="1">
    <location>
        <position position="37"/>
    </location>
    <ligand>
        <name>ATP</name>
        <dbReference type="ChEBI" id="CHEBI:30616"/>
    </ligand>
</feature>
<feature type="binding site" evidence="1">
    <location>
        <position position="90"/>
    </location>
    <ligand>
        <name>L-citrulline</name>
        <dbReference type="ChEBI" id="CHEBI:57743"/>
    </ligand>
</feature>
<feature type="binding site" evidence="1">
    <location>
        <position position="95"/>
    </location>
    <ligand>
        <name>L-citrulline</name>
        <dbReference type="ChEBI" id="CHEBI:57743"/>
    </ligand>
</feature>
<feature type="binding site" evidence="1">
    <location>
        <position position="120"/>
    </location>
    <ligand>
        <name>ATP</name>
        <dbReference type="ChEBI" id="CHEBI:30616"/>
    </ligand>
</feature>
<feature type="binding site" evidence="1">
    <location>
        <position position="122"/>
    </location>
    <ligand>
        <name>L-aspartate</name>
        <dbReference type="ChEBI" id="CHEBI:29991"/>
    </ligand>
</feature>
<feature type="binding site" evidence="1">
    <location>
        <position position="126"/>
    </location>
    <ligand>
        <name>L-aspartate</name>
        <dbReference type="ChEBI" id="CHEBI:29991"/>
    </ligand>
</feature>
<feature type="binding site" evidence="1">
    <location>
        <position position="126"/>
    </location>
    <ligand>
        <name>L-citrulline</name>
        <dbReference type="ChEBI" id="CHEBI:57743"/>
    </ligand>
</feature>
<feature type="binding site" evidence="1">
    <location>
        <position position="127"/>
    </location>
    <ligand>
        <name>L-aspartate</name>
        <dbReference type="ChEBI" id="CHEBI:29991"/>
    </ligand>
</feature>
<feature type="binding site" evidence="1">
    <location>
        <position position="130"/>
    </location>
    <ligand>
        <name>L-citrulline</name>
        <dbReference type="ChEBI" id="CHEBI:57743"/>
    </ligand>
</feature>
<feature type="binding site" evidence="1">
    <location>
        <position position="181"/>
    </location>
    <ligand>
        <name>L-citrulline</name>
        <dbReference type="ChEBI" id="CHEBI:57743"/>
    </ligand>
</feature>
<feature type="binding site" evidence="1">
    <location>
        <position position="190"/>
    </location>
    <ligand>
        <name>L-citrulline</name>
        <dbReference type="ChEBI" id="CHEBI:57743"/>
    </ligand>
</feature>
<feature type="binding site" evidence="1">
    <location>
        <position position="266"/>
    </location>
    <ligand>
        <name>L-citrulline</name>
        <dbReference type="ChEBI" id="CHEBI:57743"/>
    </ligand>
</feature>
<feature type="binding site" evidence="1">
    <location>
        <position position="278"/>
    </location>
    <ligand>
        <name>L-citrulline</name>
        <dbReference type="ChEBI" id="CHEBI:57743"/>
    </ligand>
</feature>
<name>ASSY_RHIWR</name>
<organism>
    <name type="scientific">Rhizorhabdus wittichii (strain DSM 6014 / CCUG 31198 / JCM 15750 / NBRC 105917 / EY 4224 / RW1)</name>
    <name type="common">Sphingomonas wittichii</name>
    <dbReference type="NCBI Taxonomy" id="392499"/>
    <lineage>
        <taxon>Bacteria</taxon>
        <taxon>Pseudomonadati</taxon>
        <taxon>Pseudomonadota</taxon>
        <taxon>Alphaproteobacteria</taxon>
        <taxon>Sphingomonadales</taxon>
        <taxon>Sphingomonadaceae</taxon>
        <taxon>Rhizorhabdus</taxon>
    </lineage>
</organism>
<reference key="1">
    <citation type="journal article" date="2010" name="J. Bacteriol.">
        <title>Genome sequence of the dioxin-mineralizing bacterium Sphingomonas wittichii RW1.</title>
        <authorList>
            <person name="Miller T.R."/>
            <person name="Delcher A.L."/>
            <person name="Salzberg S.L."/>
            <person name="Saunders E."/>
            <person name="Detter J.C."/>
            <person name="Halden R.U."/>
        </authorList>
    </citation>
    <scope>NUCLEOTIDE SEQUENCE [LARGE SCALE GENOMIC DNA]</scope>
    <source>
        <strain>DSM 6014 / CCUG 31198 / JCM 15750 / NBRC 105917 / EY 4224 / RW1</strain>
    </source>
</reference>
<sequence>MSDVKRVVLAFSGGLDTSVILKWLQQTYQCEVVTFTADLGQGEELEPARAKAKLMGVPDEHIFIDDLREEFVKDYVFPMMRGNALYEGLYLLGTSIARPLIAKRQIEIARAVGADAVSHGATGKGNDQVRFELGYYGLAPDIRVIAPWREWDLTSRTALIDFAEKHQIPVPKDKRGESPFSTDANLLHTSSEGKVLEDPWEEVPDYVYSRTVNPEDAPDQPEIITIDFERGDGVALNGEGMSPATLLTALNELGRKHGIGRLDLVENRFVGMKSRGMYETPGGAIYHLAHRGIEQITLDRGAAHLKDELAPRYAELIYNGFWFSPEREMLQAAIDHSQEKVTGTVRLKLYKGGVHVIGRKSPYTLYSEKVVTFEDDAGAYDQRDAAGFIKLNALRLRLLGRRDGR</sequence>
<proteinExistence type="inferred from homology"/>
<protein>
    <recommendedName>
        <fullName evidence="1">Argininosuccinate synthase</fullName>
        <ecNumber evidence="1">6.3.4.5</ecNumber>
    </recommendedName>
    <alternativeName>
        <fullName evidence="1">Citrulline--aspartate ligase</fullName>
    </alternativeName>
</protein>
<keyword id="KW-0028">Amino-acid biosynthesis</keyword>
<keyword id="KW-0055">Arginine biosynthesis</keyword>
<keyword id="KW-0067">ATP-binding</keyword>
<keyword id="KW-0963">Cytoplasm</keyword>
<keyword id="KW-0436">Ligase</keyword>
<keyword id="KW-0547">Nucleotide-binding</keyword>
<keyword id="KW-1185">Reference proteome</keyword>
<accession>A5VAK5</accession>
<comment type="catalytic activity">
    <reaction evidence="1">
        <text>L-citrulline + L-aspartate + ATP = 2-(N(omega)-L-arginino)succinate + AMP + diphosphate + H(+)</text>
        <dbReference type="Rhea" id="RHEA:10932"/>
        <dbReference type="ChEBI" id="CHEBI:15378"/>
        <dbReference type="ChEBI" id="CHEBI:29991"/>
        <dbReference type="ChEBI" id="CHEBI:30616"/>
        <dbReference type="ChEBI" id="CHEBI:33019"/>
        <dbReference type="ChEBI" id="CHEBI:57472"/>
        <dbReference type="ChEBI" id="CHEBI:57743"/>
        <dbReference type="ChEBI" id="CHEBI:456215"/>
        <dbReference type="EC" id="6.3.4.5"/>
    </reaction>
</comment>
<comment type="pathway">
    <text evidence="1">Amino-acid biosynthesis; L-arginine biosynthesis; L-arginine from L-ornithine and carbamoyl phosphate: step 2/3.</text>
</comment>
<comment type="subunit">
    <text evidence="1">Homotetramer.</text>
</comment>
<comment type="subcellular location">
    <subcellularLocation>
        <location evidence="1">Cytoplasm</location>
    </subcellularLocation>
</comment>
<comment type="similarity">
    <text evidence="1">Belongs to the argininosuccinate synthase family. Type 1 subfamily.</text>
</comment>
<evidence type="ECO:0000255" key="1">
    <source>
        <dbReference type="HAMAP-Rule" id="MF_00005"/>
    </source>
</evidence>
<gene>
    <name evidence="1" type="primary">argG</name>
    <name type="ordered locus">Swit_2970</name>
</gene>